<proteinExistence type="evidence at protein level"/>
<keyword id="KW-1003">Cell membrane</keyword>
<keyword id="KW-0342">GTP-binding</keyword>
<keyword id="KW-0449">Lipoprotein</keyword>
<keyword id="KW-0472">Membrane</keyword>
<keyword id="KW-0547">Nucleotide-binding</keyword>
<keyword id="KW-0636">Prenylation</keyword>
<keyword id="KW-0653">Protein transport</keyword>
<keyword id="KW-1185">Reference proteome</keyword>
<keyword id="KW-0813">Transport</keyword>
<gene>
    <name type="primary">RABA1B</name>
    <name type="synonym">RAB11</name>
    <name type="ordered locus">At1g16920</name>
    <name type="ORF">F6I1.7</name>
</gene>
<comment type="function">
    <text evidence="1">Intracellular vesicle trafficking and protein transport.</text>
</comment>
<comment type="subcellular location">
    <subcellularLocation>
        <location evidence="2">Cell membrane</location>
        <topology evidence="3">Lipid-anchor</topology>
        <orientation evidence="3">Cytoplasmic side</orientation>
    </subcellularLocation>
</comment>
<comment type="similarity">
    <text evidence="3">Belongs to the small GTPase superfamily. Rab family.</text>
</comment>
<reference key="1">
    <citation type="journal article" date="1994" name="Plant Physiol.">
        <title>A new member of the small GTP-binding protein family in Arabidopsis thaliana.</title>
        <authorList>
            <person name="Yi Y."/>
            <person name="Guerinot M."/>
        </authorList>
    </citation>
    <scope>NUCLEOTIDE SEQUENCE [MRNA]</scope>
    <source>
        <tissue>Root</tissue>
    </source>
</reference>
<reference key="2">
    <citation type="journal article" date="2000" name="Nature">
        <title>Sequence and analysis of chromosome 1 of the plant Arabidopsis thaliana.</title>
        <authorList>
            <person name="Theologis A."/>
            <person name="Ecker J.R."/>
            <person name="Palm C.J."/>
            <person name="Federspiel N.A."/>
            <person name="Kaul S."/>
            <person name="White O."/>
            <person name="Alonso J."/>
            <person name="Altafi H."/>
            <person name="Araujo R."/>
            <person name="Bowman C.L."/>
            <person name="Brooks S.Y."/>
            <person name="Buehler E."/>
            <person name="Chan A."/>
            <person name="Chao Q."/>
            <person name="Chen H."/>
            <person name="Cheuk R.F."/>
            <person name="Chin C.W."/>
            <person name="Chung M.K."/>
            <person name="Conn L."/>
            <person name="Conway A.B."/>
            <person name="Conway A.R."/>
            <person name="Creasy T.H."/>
            <person name="Dewar K."/>
            <person name="Dunn P."/>
            <person name="Etgu P."/>
            <person name="Feldblyum T.V."/>
            <person name="Feng J.-D."/>
            <person name="Fong B."/>
            <person name="Fujii C.Y."/>
            <person name="Gill J.E."/>
            <person name="Goldsmith A.D."/>
            <person name="Haas B."/>
            <person name="Hansen N.F."/>
            <person name="Hughes B."/>
            <person name="Huizar L."/>
            <person name="Hunter J.L."/>
            <person name="Jenkins J."/>
            <person name="Johnson-Hopson C."/>
            <person name="Khan S."/>
            <person name="Khaykin E."/>
            <person name="Kim C.J."/>
            <person name="Koo H.L."/>
            <person name="Kremenetskaia I."/>
            <person name="Kurtz D.B."/>
            <person name="Kwan A."/>
            <person name="Lam B."/>
            <person name="Langin-Hooper S."/>
            <person name="Lee A."/>
            <person name="Lee J.M."/>
            <person name="Lenz C.A."/>
            <person name="Li J.H."/>
            <person name="Li Y.-P."/>
            <person name="Lin X."/>
            <person name="Liu S.X."/>
            <person name="Liu Z.A."/>
            <person name="Luros J.S."/>
            <person name="Maiti R."/>
            <person name="Marziali A."/>
            <person name="Militscher J."/>
            <person name="Miranda M."/>
            <person name="Nguyen M."/>
            <person name="Nierman W.C."/>
            <person name="Osborne B.I."/>
            <person name="Pai G."/>
            <person name="Peterson J."/>
            <person name="Pham P.K."/>
            <person name="Rizzo M."/>
            <person name="Rooney T."/>
            <person name="Rowley D."/>
            <person name="Sakano H."/>
            <person name="Salzberg S.L."/>
            <person name="Schwartz J.R."/>
            <person name="Shinn P."/>
            <person name="Southwick A.M."/>
            <person name="Sun H."/>
            <person name="Tallon L.J."/>
            <person name="Tambunga G."/>
            <person name="Toriumi M.J."/>
            <person name="Town C.D."/>
            <person name="Utterback T."/>
            <person name="Van Aken S."/>
            <person name="Vaysberg M."/>
            <person name="Vysotskaia V.S."/>
            <person name="Walker M."/>
            <person name="Wu D."/>
            <person name="Yu G."/>
            <person name="Fraser C.M."/>
            <person name="Venter J.C."/>
            <person name="Davis R.W."/>
        </authorList>
    </citation>
    <scope>NUCLEOTIDE SEQUENCE [LARGE SCALE GENOMIC DNA]</scope>
    <source>
        <strain>cv. Columbia</strain>
    </source>
</reference>
<reference key="3">
    <citation type="journal article" date="2017" name="Plant J.">
        <title>Araport11: a complete reannotation of the Arabidopsis thaliana reference genome.</title>
        <authorList>
            <person name="Cheng C.Y."/>
            <person name="Krishnakumar V."/>
            <person name="Chan A.P."/>
            <person name="Thibaud-Nissen F."/>
            <person name="Schobel S."/>
            <person name="Town C.D."/>
        </authorList>
    </citation>
    <scope>GENOME REANNOTATION</scope>
    <source>
        <strain>cv. Columbia</strain>
    </source>
</reference>
<reference key="4">
    <citation type="journal article" date="2003" name="Science">
        <title>Empirical analysis of transcriptional activity in the Arabidopsis genome.</title>
        <authorList>
            <person name="Yamada K."/>
            <person name="Lim J."/>
            <person name="Dale J.M."/>
            <person name="Chen H."/>
            <person name="Shinn P."/>
            <person name="Palm C.J."/>
            <person name="Southwick A.M."/>
            <person name="Wu H.C."/>
            <person name="Kim C.J."/>
            <person name="Nguyen M."/>
            <person name="Pham P.K."/>
            <person name="Cheuk R.F."/>
            <person name="Karlin-Newmann G."/>
            <person name="Liu S.X."/>
            <person name="Lam B."/>
            <person name="Sakano H."/>
            <person name="Wu T."/>
            <person name="Yu G."/>
            <person name="Miranda M."/>
            <person name="Quach H.L."/>
            <person name="Tripp M."/>
            <person name="Chang C.H."/>
            <person name="Lee J.M."/>
            <person name="Toriumi M.J."/>
            <person name="Chan M.M."/>
            <person name="Tang C.C."/>
            <person name="Onodera C.S."/>
            <person name="Deng J.M."/>
            <person name="Akiyama K."/>
            <person name="Ansari Y."/>
            <person name="Arakawa T."/>
            <person name="Banh J."/>
            <person name="Banno F."/>
            <person name="Bowser L."/>
            <person name="Brooks S.Y."/>
            <person name="Carninci P."/>
            <person name="Chao Q."/>
            <person name="Choy N."/>
            <person name="Enju A."/>
            <person name="Goldsmith A.D."/>
            <person name="Gurjal M."/>
            <person name="Hansen N.F."/>
            <person name="Hayashizaki Y."/>
            <person name="Johnson-Hopson C."/>
            <person name="Hsuan V.W."/>
            <person name="Iida K."/>
            <person name="Karnes M."/>
            <person name="Khan S."/>
            <person name="Koesema E."/>
            <person name="Ishida J."/>
            <person name="Jiang P.X."/>
            <person name="Jones T."/>
            <person name="Kawai J."/>
            <person name="Kamiya A."/>
            <person name="Meyers C."/>
            <person name="Nakajima M."/>
            <person name="Narusaka M."/>
            <person name="Seki M."/>
            <person name="Sakurai T."/>
            <person name="Satou M."/>
            <person name="Tamse R."/>
            <person name="Vaysberg M."/>
            <person name="Wallender E.K."/>
            <person name="Wong C."/>
            <person name="Yamamura Y."/>
            <person name="Yuan S."/>
            <person name="Shinozaki K."/>
            <person name="Davis R.W."/>
            <person name="Theologis A."/>
            <person name="Ecker J.R."/>
        </authorList>
    </citation>
    <scope>NUCLEOTIDE SEQUENCE [LARGE SCALE MRNA]</scope>
    <source>
        <strain>cv. Columbia</strain>
    </source>
</reference>
<reference key="5">
    <citation type="submission" date="2006-07" db="EMBL/GenBank/DDBJ databases">
        <title>Large-scale analysis of RIKEN Arabidopsis full-length (RAFL) cDNAs.</title>
        <authorList>
            <person name="Totoki Y."/>
            <person name="Seki M."/>
            <person name="Ishida J."/>
            <person name="Nakajima M."/>
            <person name="Enju A."/>
            <person name="Kamiya A."/>
            <person name="Narusaka M."/>
            <person name="Shin-i T."/>
            <person name="Nakagawa M."/>
            <person name="Sakamoto N."/>
            <person name="Oishi K."/>
            <person name="Kohara Y."/>
            <person name="Kobayashi M."/>
            <person name="Toyoda A."/>
            <person name="Sakaki Y."/>
            <person name="Sakurai T."/>
            <person name="Iida K."/>
            <person name="Akiyama K."/>
            <person name="Satou M."/>
            <person name="Toyoda T."/>
            <person name="Konagaya A."/>
            <person name="Carninci P."/>
            <person name="Kawai J."/>
            <person name="Hayashizaki Y."/>
            <person name="Shinozaki K."/>
        </authorList>
    </citation>
    <scope>NUCLEOTIDE SEQUENCE [LARGE SCALE MRNA]</scope>
    <source>
        <strain>cv. Columbia</strain>
    </source>
</reference>
<reference key="6">
    <citation type="submission" date="2002-03" db="EMBL/GenBank/DDBJ databases">
        <title>Full-length cDNA from Arabidopsis thaliana.</title>
        <authorList>
            <person name="Brover V.V."/>
            <person name="Troukhan M.E."/>
            <person name="Alexandrov N.A."/>
            <person name="Lu Y.-P."/>
            <person name="Flavell R.B."/>
            <person name="Feldmann K.A."/>
        </authorList>
    </citation>
    <scope>NUCLEOTIDE SEQUENCE [LARGE SCALE MRNA]</scope>
</reference>
<reference key="7">
    <citation type="journal article" date="2003" name="Plant Physiol.">
        <title>Analysis of the small GTPase gene superfamily of Arabidopsis.</title>
        <authorList>
            <person name="Vernoud V."/>
            <person name="Horton A.C."/>
            <person name="Yang Z."/>
            <person name="Nielsen E."/>
        </authorList>
    </citation>
    <scope>GENE FAMILY</scope>
    <scope>NOMENCLATURE</scope>
</reference>
<reference key="8">
    <citation type="journal article" date="2004" name="Mol. Cell. Proteomics">
        <title>Identification of new intrinsic proteins in Arabidopsis plasma membrane proteome.</title>
        <authorList>
            <person name="Marmagne A."/>
            <person name="Rouet M.-A."/>
            <person name="Ferro M."/>
            <person name="Rolland N."/>
            <person name="Alcon C."/>
            <person name="Joyard J."/>
            <person name="Garin J."/>
            <person name="Barbier-Brygoo H."/>
            <person name="Ephritikhine G."/>
        </authorList>
    </citation>
    <scope>IDENTIFICATION BY MASS SPECTROMETRY</scope>
    <scope>SUBCELLULAR LOCATION [LARGE SCALE ANALYSIS]</scope>
</reference>
<accession>Q39222</accession>
<accession>Q0WSQ7</accession>
<accession>Q8LC05</accession>
<feature type="chain" id="PRO_0000121164" description="Ras-related protein RABA1b">
    <location>
        <begin position="1"/>
        <end position="216"/>
    </location>
</feature>
<feature type="short sequence motif" description="Effector region" evidence="1">
    <location>
        <begin position="42"/>
        <end position="50"/>
    </location>
</feature>
<feature type="binding site" evidence="1">
    <location>
        <begin position="20"/>
        <end position="27"/>
    </location>
    <ligand>
        <name>GTP</name>
        <dbReference type="ChEBI" id="CHEBI:37565"/>
    </ligand>
</feature>
<feature type="binding site" evidence="1">
    <location>
        <begin position="68"/>
        <end position="72"/>
    </location>
    <ligand>
        <name>GTP</name>
        <dbReference type="ChEBI" id="CHEBI:37565"/>
    </ligand>
</feature>
<feature type="binding site" evidence="1">
    <location>
        <begin position="126"/>
        <end position="129"/>
    </location>
    <ligand>
        <name>GTP</name>
        <dbReference type="ChEBI" id="CHEBI:37565"/>
    </ligand>
</feature>
<feature type="binding site" evidence="1">
    <location>
        <begin position="156"/>
        <end position="157"/>
    </location>
    <ligand>
        <name>GTP</name>
        <dbReference type="ChEBI" id="CHEBI:37565"/>
    </ligand>
</feature>
<feature type="lipid moiety-binding region" description="S-geranylgeranyl cysteine" evidence="1">
    <location>
        <position position="213"/>
    </location>
</feature>
<feature type="lipid moiety-binding region" description="S-geranylgeranyl cysteine" evidence="1">
    <location>
        <position position="214"/>
    </location>
</feature>
<feature type="sequence conflict" description="In Ref. 6; AAM63927." evidence="3" ref="6">
    <original>L</original>
    <variation>F</variation>
    <location>
        <position position="55"/>
    </location>
</feature>
<name>RAA1B_ARATH</name>
<dbReference type="EMBL" id="L18883">
    <property type="protein sequence ID" value="AAA32872.1"/>
    <property type="molecule type" value="mRNA"/>
</dbReference>
<dbReference type="EMBL" id="AC051629">
    <property type="protein sequence ID" value="AAF99840.1"/>
    <property type="molecule type" value="Genomic_DNA"/>
</dbReference>
<dbReference type="EMBL" id="CP002684">
    <property type="protein sequence ID" value="AEE29522.1"/>
    <property type="molecule type" value="Genomic_DNA"/>
</dbReference>
<dbReference type="EMBL" id="BT006406">
    <property type="protein sequence ID" value="AAP21214.1"/>
    <property type="molecule type" value="mRNA"/>
</dbReference>
<dbReference type="EMBL" id="AK227865">
    <property type="protein sequence ID" value="BAE99841.1"/>
    <property type="molecule type" value="mRNA"/>
</dbReference>
<dbReference type="EMBL" id="AY086881">
    <property type="protein sequence ID" value="AAM63927.1"/>
    <property type="molecule type" value="mRNA"/>
</dbReference>
<dbReference type="PIR" id="S59942">
    <property type="entry name" value="S59942"/>
</dbReference>
<dbReference type="RefSeq" id="NP_173136.1">
    <property type="nucleotide sequence ID" value="NM_101553.3"/>
</dbReference>
<dbReference type="SMR" id="Q39222"/>
<dbReference type="BioGRID" id="23503">
    <property type="interactions" value="7"/>
</dbReference>
<dbReference type="FunCoup" id="Q39222">
    <property type="interactions" value="3513"/>
</dbReference>
<dbReference type="IntAct" id="Q39222">
    <property type="interactions" value="7"/>
</dbReference>
<dbReference type="STRING" id="3702.Q39222"/>
<dbReference type="iPTMnet" id="Q39222"/>
<dbReference type="PaxDb" id="3702-AT1G16920.1"/>
<dbReference type="ProteomicsDB" id="236554"/>
<dbReference type="EnsemblPlants" id="AT1G16920.1">
    <property type="protein sequence ID" value="AT1G16920.1"/>
    <property type="gene ID" value="AT1G16920"/>
</dbReference>
<dbReference type="GeneID" id="838263"/>
<dbReference type="Gramene" id="AT1G16920.1">
    <property type="protein sequence ID" value="AT1G16920.1"/>
    <property type="gene ID" value="AT1G16920"/>
</dbReference>
<dbReference type="KEGG" id="ath:AT1G16920"/>
<dbReference type="Araport" id="AT1G16920"/>
<dbReference type="TAIR" id="AT1G16920">
    <property type="gene designation" value="RABA1B"/>
</dbReference>
<dbReference type="eggNOG" id="KOG0087">
    <property type="taxonomic scope" value="Eukaryota"/>
</dbReference>
<dbReference type="HOGENOM" id="CLU_041217_23_0_1"/>
<dbReference type="InParanoid" id="Q39222"/>
<dbReference type="OMA" id="NIKLAIW"/>
<dbReference type="OrthoDB" id="9989112at2759"/>
<dbReference type="PhylomeDB" id="Q39222"/>
<dbReference type="PRO" id="PR:Q39222"/>
<dbReference type="Proteomes" id="UP000006548">
    <property type="component" value="Chromosome 1"/>
</dbReference>
<dbReference type="ExpressionAtlas" id="Q39222">
    <property type="expression patterns" value="baseline and differential"/>
</dbReference>
<dbReference type="GO" id="GO:0005634">
    <property type="term" value="C:nucleus"/>
    <property type="evidence" value="ECO:0007005"/>
    <property type="project" value="TAIR"/>
</dbReference>
<dbReference type="GO" id="GO:0000325">
    <property type="term" value="C:plant-type vacuole"/>
    <property type="evidence" value="ECO:0007005"/>
    <property type="project" value="TAIR"/>
</dbReference>
<dbReference type="GO" id="GO:0005886">
    <property type="term" value="C:plasma membrane"/>
    <property type="evidence" value="ECO:0007005"/>
    <property type="project" value="TAIR"/>
</dbReference>
<dbReference type="GO" id="GO:0005773">
    <property type="term" value="C:vacuole"/>
    <property type="evidence" value="ECO:0007005"/>
    <property type="project" value="TAIR"/>
</dbReference>
<dbReference type="GO" id="GO:0005525">
    <property type="term" value="F:GTP binding"/>
    <property type="evidence" value="ECO:0000314"/>
    <property type="project" value="TAIR"/>
</dbReference>
<dbReference type="GO" id="GO:0003924">
    <property type="term" value="F:GTPase activity"/>
    <property type="evidence" value="ECO:0007669"/>
    <property type="project" value="InterPro"/>
</dbReference>
<dbReference type="GO" id="GO:0042538">
    <property type="term" value="P:hyperosmotic salinity response"/>
    <property type="evidence" value="ECO:0000315"/>
    <property type="project" value="TAIR"/>
</dbReference>
<dbReference type="GO" id="GO:0006886">
    <property type="term" value="P:intracellular protein transport"/>
    <property type="evidence" value="ECO:0000304"/>
    <property type="project" value="TAIR"/>
</dbReference>
<dbReference type="GO" id="GO:0060627">
    <property type="term" value="P:regulation of vesicle-mediated transport"/>
    <property type="evidence" value="ECO:0000314"/>
    <property type="project" value="CACAO"/>
</dbReference>
<dbReference type="CDD" id="cd01868">
    <property type="entry name" value="Rab11_like"/>
    <property type="match status" value="1"/>
</dbReference>
<dbReference type="FunFam" id="3.40.50.300:FF:000067">
    <property type="entry name" value="ras-related protein RABA1f"/>
    <property type="match status" value="1"/>
</dbReference>
<dbReference type="Gene3D" id="3.40.50.300">
    <property type="entry name" value="P-loop containing nucleotide triphosphate hydrolases"/>
    <property type="match status" value="1"/>
</dbReference>
<dbReference type="InterPro" id="IPR027417">
    <property type="entry name" value="P-loop_NTPase"/>
</dbReference>
<dbReference type="InterPro" id="IPR050209">
    <property type="entry name" value="Rab_GTPases_membrane_traffic"/>
</dbReference>
<dbReference type="InterPro" id="IPR005225">
    <property type="entry name" value="Small_GTP-bd"/>
</dbReference>
<dbReference type="InterPro" id="IPR001806">
    <property type="entry name" value="Small_GTPase"/>
</dbReference>
<dbReference type="NCBIfam" id="TIGR00231">
    <property type="entry name" value="small_GTP"/>
    <property type="match status" value="1"/>
</dbReference>
<dbReference type="PANTHER" id="PTHR47979">
    <property type="entry name" value="DRAB11-RELATED"/>
    <property type="match status" value="1"/>
</dbReference>
<dbReference type="Pfam" id="PF00071">
    <property type="entry name" value="Ras"/>
    <property type="match status" value="1"/>
</dbReference>
<dbReference type="PRINTS" id="PR00449">
    <property type="entry name" value="RASTRNSFRMNG"/>
</dbReference>
<dbReference type="SMART" id="SM00175">
    <property type="entry name" value="RAB"/>
    <property type="match status" value="1"/>
</dbReference>
<dbReference type="SMART" id="SM00176">
    <property type="entry name" value="RAN"/>
    <property type="match status" value="1"/>
</dbReference>
<dbReference type="SMART" id="SM00173">
    <property type="entry name" value="RAS"/>
    <property type="match status" value="1"/>
</dbReference>
<dbReference type="SMART" id="SM00174">
    <property type="entry name" value="RHO"/>
    <property type="match status" value="1"/>
</dbReference>
<dbReference type="SUPFAM" id="SSF52540">
    <property type="entry name" value="P-loop containing nucleoside triphosphate hydrolases"/>
    <property type="match status" value="1"/>
</dbReference>
<dbReference type="PROSITE" id="PS51419">
    <property type="entry name" value="RAB"/>
    <property type="match status" value="1"/>
</dbReference>
<sequence length="216" mass="24020">MAGYRVEDDYDYLFKVVLIGDSGVGKSNLLSRFTKNEFNLESKSTIGVEFATRTLKVDGKVVKAQIWDTAGQERYRAITSAYYRGAVGALLVYDVTRRATFENVDRWLKELKNHTDPNIVVMLVGNKSDLRHLLAVPTEDGKSYAEQESLCFMETSALEATNVEDAFAEVLTQIYRITSKKQVEAGEDGNASVPKGEKIEVKNDVSALKKLGCCSN</sequence>
<protein>
    <recommendedName>
        <fullName>Ras-related protein RABA1b</fullName>
        <shortName>AtRABA1b</shortName>
    </recommendedName>
    <alternativeName>
        <fullName>Ras-related protein Rab11</fullName>
        <shortName>AtRab11</shortName>
    </alternativeName>
</protein>
<evidence type="ECO:0000250" key="1"/>
<evidence type="ECO:0000269" key="2">
    <source>
    </source>
</evidence>
<evidence type="ECO:0000305" key="3"/>
<organism>
    <name type="scientific">Arabidopsis thaliana</name>
    <name type="common">Mouse-ear cress</name>
    <dbReference type="NCBI Taxonomy" id="3702"/>
    <lineage>
        <taxon>Eukaryota</taxon>
        <taxon>Viridiplantae</taxon>
        <taxon>Streptophyta</taxon>
        <taxon>Embryophyta</taxon>
        <taxon>Tracheophyta</taxon>
        <taxon>Spermatophyta</taxon>
        <taxon>Magnoliopsida</taxon>
        <taxon>eudicotyledons</taxon>
        <taxon>Gunneridae</taxon>
        <taxon>Pentapetalae</taxon>
        <taxon>rosids</taxon>
        <taxon>malvids</taxon>
        <taxon>Brassicales</taxon>
        <taxon>Brassicaceae</taxon>
        <taxon>Camelineae</taxon>
        <taxon>Arabidopsis</taxon>
    </lineage>
</organism>